<reference key="1">
    <citation type="journal article" date="2007" name="J. Bacteriol.">
        <title>The complete genome sequence of Campylobacter jejuni strain 81116 (NCTC11828).</title>
        <authorList>
            <person name="Pearson B.M."/>
            <person name="Gaskin D.J.H."/>
            <person name="Segers R.P.A.M."/>
            <person name="Wells J.M."/>
            <person name="Nuijten P.J.M."/>
            <person name="van Vliet A.H.M."/>
        </authorList>
    </citation>
    <scope>NUCLEOTIDE SEQUENCE [LARGE SCALE GENOMIC DNA]</scope>
    <source>
        <strain>81116 / NCTC 11828</strain>
    </source>
</reference>
<keyword id="KW-0067">ATP-binding</keyword>
<keyword id="KW-0963">Cytoplasm</keyword>
<keyword id="KW-0275">Fatty acid biosynthesis</keyword>
<keyword id="KW-0276">Fatty acid metabolism</keyword>
<keyword id="KW-0444">Lipid biosynthesis</keyword>
<keyword id="KW-0443">Lipid metabolism</keyword>
<keyword id="KW-0547">Nucleotide-binding</keyword>
<keyword id="KW-0808">Transferase</keyword>
<comment type="function">
    <text evidence="1">Component of the acetyl coenzyme A carboxylase (ACC) complex. First, biotin carboxylase catalyzes the carboxylation of biotin on its carrier protein (BCCP) and then the CO(2) group is transferred by the carboxyltransferase to acetyl-CoA to form malonyl-CoA.</text>
</comment>
<comment type="catalytic activity">
    <reaction evidence="1">
        <text>N(6)-carboxybiotinyl-L-lysyl-[protein] + acetyl-CoA = N(6)-biotinyl-L-lysyl-[protein] + malonyl-CoA</text>
        <dbReference type="Rhea" id="RHEA:54728"/>
        <dbReference type="Rhea" id="RHEA-COMP:10505"/>
        <dbReference type="Rhea" id="RHEA-COMP:10506"/>
        <dbReference type="ChEBI" id="CHEBI:57288"/>
        <dbReference type="ChEBI" id="CHEBI:57384"/>
        <dbReference type="ChEBI" id="CHEBI:83144"/>
        <dbReference type="ChEBI" id="CHEBI:83145"/>
        <dbReference type="EC" id="2.1.3.15"/>
    </reaction>
</comment>
<comment type="pathway">
    <text evidence="1">Lipid metabolism; malonyl-CoA biosynthesis; malonyl-CoA from acetyl-CoA: step 1/1.</text>
</comment>
<comment type="subunit">
    <text evidence="1">Acetyl-CoA carboxylase is a heterohexamer composed of biotin carboxyl carrier protein (AccB), biotin carboxylase (AccC) and two subunits each of ACCase subunit alpha (AccA) and ACCase subunit beta (AccD).</text>
</comment>
<comment type="subcellular location">
    <subcellularLocation>
        <location evidence="1">Cytoplasm</location>
    </subcellularLocation>
</comment>
<comment type="similarity">
    <text evidence="1">Belongs to the AccA family.</text>
</comment>
<proteinExistence type="inferred from homology"/>
<gene>
    <name evidence="1" type="primary">accA</name>
    <name type="ordered locus">C8J_0418</name>
</gene>
<feature type="chain" id="PRO_1000072881" description="Acetyl-coenzyme A carboxylase carboxyl transferase subunit alpha">
    <location>
        <begin position="1"/>
        <end position="312"/>
    </location>
</feature>
<feature type="domain" description="CoA carboxyltransferase C-terminal" evidence="2">
    <location>
        <begin position="36"/>
        <end position="286"/>
    </location>
</feature>
<evidence type="ECO:0000255" key="1">
    <source>
        <dbReference type="HAMAP-Rule" id="MF_00823"/>
    </source>
</evidence>
<evidence type="ECO:0000255" key="2">
    <source>
        <dbReference type="PROSITE-ProRule" id="PRU01137"/>
    </source>
</evidence>
<name>ACCA_CAMJ8</name>
<organism>
    <name type="scientific">Campylobacter jejuni subsp. jejuni serotype O:6 (strain 81116 / NCTC 11828)</name>
    <dbReference type="NCBI Taxonomy" id="407148"/>
    <lineage>
        <taxon>Bacteria</taxon>
        <taxon>Pseudomonadati</taxon>
        <taxon>Campylobacterota</taxon>
        <taxon>Epsilonproteobacteria</taxon>
        <taxon>Campylobacterales</taxon>
        <taxon>Campylobacteraceae</taxon>
        <taxon>Campylobacter</taxon>
    </lineage>
</organism>
<protein>
    <recommendedName>
        <fullName evidence="1">Acetyl-coenzyme A carboxylase carboxyl transferase subunit alpha</fullName>
        <shortName evidence="1">ACCase subunit alpha</shortName>
        <shortName evidence="1">Acetyl-CoA carboxylase carboxyltransferase subunit alpha</shortName>
        <ecNumber evidence="1">2.1.3.15</ecNumber>
    </recommendedName>
</protein>
<sequence>MASYLDFEKNIQQIDEDIINAQIKGDTEAVSILKKNLEKEISKTYKNLSDFQRLQLARHPDRPYALDYIELILNDAHEIHGDRAFRDDPAIVCFMGYLGEKKIIVIGEQKGRGTKDKIARNFGMPHPEGYRKALRVARLAEKFQIPILFLIDTPGAYPGIGAEERGQSEAIARNLYELSDLKIPTIAIVIGEGGSGGALAIGVADRLAMMKNSVFSVISPEGCAAILWNDPAKSEAATKAMKVTADDLKSQGLIDDVIDEPTNGAHRNKEAAAVAIADYVKKSLNELENIDVRELSANRMQKILKLGAYQEA</sequence>
<accession>A8FKN0</accession>
<dbReference type="EC" id="2.1.3.15" evidence="1"/>
<dbReference type="EMBL" id="CP000814">
    <property type="protein sequence ID" value="ABV52017.1"/>
    <property type="molecule type" value="Genomic_DNA"/>
</dbReference>
<dbReference type="RefSeq" id="WP_002854780.1">
    <property type="nucleotide sequence ID" value="NC_009839.1"/>
</dbReference>
<dbReference type="SMR" id="A8FKN0"/>
<dbReference type="KEGG" id="cju:C8J_0418"/>
<dbReference type="HOGENOM" id="CLU_015486_0_2_7"/>
<dbReference type="UniPathway" id="UPA00655">
    <property type="reaction ID" value="UER00711"/>
</dbReference>
<dbReference type="GO" id="GO:0009317">
    <property type="term" value="C:acetyl-CoA carboxylase complex"/>
    <property type="evidence" value="ECO:0007669"/>
    <property type="project" value="InterPro"/>
</dbReference>
<dbReference type="GO" id="GO:0003989">
    <property type="term" value="F:acetyl-CoA carboxylase activity"/>
    <property type="evidence" value="ECO:0007669"/>
    <property type="project" value="InterPro"/>
</dbReference>
<dbReference type="GO" id="GO:0005524">
    <property type="term" value="F:ATP binding"/>
    <property type="evidence" value="ECO:0007669"/>
    <property type="project" value="UniProtKB-KW"/>
</dbReference>
<dbReference type="GO" id="GO:0016743">
    <property type="term" value="F:carboxyl- or carbamoyltransferase activity"/>
    <property type="evidence" value="ECO:0007669"/>
    <property type="project" value="UniProtKB-UniRule"/>
</dbReference>
<dbReference type="GO" id="GO:0006633">
    <property type="term" value="P:fatty acid biosynthetic process"/>
    <property type="evidence" value="ECO:0007669"/>
    <property type="project" value="UniProtKB-KW"/>
</dbReference>
<dbReference type="GO" id="GO:2001295">
    <property type="term" value="P:malonyl-CoA biosynthetic process"/>
    <property type="evidence" value="ECO:0007669"/>
    <property type="project" value="UniProtKB-UniRule"/>
</dbReference>
<dbReference type="Gene3D" id="3.90.226.10">
    <property type="entry name" value="2-enoyl-CoA Hydratase, Chain A, domain 1"/>
    <property type="match status" value="1"/>
</dbReference>
<dbReference type="HAMAP" id="MF_00823">
    <property type="entry name" value="AcetylCoA_CT_alpha"/>
    <property type="match status" value="1"/>
</dbReference>
<dbReference type="InterPro" id="IPR001095">
    <property type="entry name" value="Acetyl_CoA_COase_a_su"/>
</dbReference>
<dbReference type="InterPro" id="IPR029045">
    <property type="entry name" value="ClpP/crotonase-like_dom_sf"/>
</dbReference>
<dbReference type="InterPro" id="IPR011763">
    <property type="entry name" value="COA_CT_C"/>
</dbReference>
<dbReference type="NCBIfam" id="TIGR00513">
    <property type="entry name" value="accA"/>
    <property type="match status" value="1"/>
</dbReference>
<dbReference type="NCBIfam" id="NF041504">
    <property type="entry name" value="AccA_sub"/>
    <property type="match status" value="1"/>
</dbReference>
<dbReference type="NCBIfam" id="NF004344">
    <property type="entry name" value="PRK05724.1"/>
    <property type="match status" value="1"/>
</dbReference>
<dbReference type="PANTHER" id="PTHR42853">
    <property type="entry name" value="ACETYL-COENZYME A CARBOXYLASE CARBOXYL TRANSFERASE SUBUNIT ALPHA"/>
    <property type="match status" value="1"/>
</dbReference>
<dbReference type="PANTHER" id="PTHR42853:SF3">
    <property type="entry name" value="ACETYL-COENZYME A CARBOXYLASE CARBOXYL TRANSFERASE SUBUNIT ALPHA, CHLOROPLASTIC"/>
    <property type="match status" value="1"/>
</dbReference>
<dbReference type="Pfam" id="PF03255">
    <property type="entry name" value="ACCA"/>
    <property type="match status" value="1"/>
</dbReference>
<dbReference type="PRINTS" id="PR01069">
    <property type="entry name" value="ACCCTRFRASEA"/>
</dbReference>
<dbReference type="SUPFAM" id="SSF52096">
    <property type="entry name" value="ClpP/crotonase"/>
    <property type="match status" value="1"/>
</dbReference>
<dbReference type="PROSITE" id="PS50989">
    <property type="entry name" value="COA_CT_CTER"/>
    <property type="match status" value="1"/>
</dbReference>